<keyword id="KW-0017">Alkaloid metabolism</keyword>
<keyword id="KW-0325">Glycoprotein</keyword>
<keyword id="KW-0521">NADP</keyword>
<keyword id="KW-0560">Oxidoreductase</keyword>
<keyword id="KW-1185">Reference proteome</keyword>
<keyword id="KW-0732">Signal</keyword>
<name>EASD_CLAP2</name>
<proteinExistence type="inferred from homology"/>
<accession>M1VVW5</accession>
<accession>G8GV64</accession>
<protein>
    <recommendedName>
        <fullName evidence="4">Chanoclavine-I dehydrogenase easD</fullName>
        <shortName evidence="4">ChaDH</shortName>
        <ecNumber evidence="4">1.1.1.332</ecNumber>
    </recommendedName>
    <alternativeName>
        <fullName evidence="21">Ergot alkaloid synthesis protein D</fullName>
    </alternativeName>
    <alternativeName>
        <fullName evidence="20">Oxidoreductase 2</fullName>
    </alternativeName>
</protein>
<sequence>MPSMTSKVFAITGGASGIGAATCRLLAERGAAVICLADVSSTNFTSLQESIAKSNPSTLVHCTELDVRSADKVDQWLQSIVSTHGDLHGAANVAGIAQGAGLRATPTILEENDAEWSRILDVNLNGVFYSTRAQVRVMKDLPPGHRSIVNVASIAAFSHVPDVYAYGTSKSACAYLTTCIAADVFWSGIRVNCVSPGITNTPMLPQFEPKAKSLDEIKDMYRDQGYPTGEADGVARTIVWLLSEDSIPVYGANINVGACPP</sequence>
<dbReference type="EC" id="1.1.1.332" evidence="4"/>
<dbReference type="EMBL" id="JN186799">
    <property type="protein sequence ID" value="AET79189.1"/>
    <property type="molecule type" value="Genomic_DNA"/>
</dbReference>
<dbReference type="EMBL" id="CAGA01000020">
    <property type="protein sequence ID" value="CCE30232.1"/>
    <property type="molecule type" value="Genomic_DNA"/>
</dbReference>
<dbReference type="SMR" id="M1VVW5"/>
<dbReference type="STRING" id="1111077.M1VVW5"/>
<dbReference type="GlyCosmos" id="M1VVW5">
    <property type="glycosylation" value="1 site, No reported glycans"/>
</dbReference>
<dbReference type="VEuPathDB" id="FungiDB:CPUR_04080"/>
<dbReference type="eggNOG" id="KOG0725">
    <property type="taxonomic scope" value="Eukaryota"/>
</dbReference>
<dbReference type="HOGENOM" id="CLU_010194_1_0_1"/>
<dbReference type="OrthoDB" id="1669814at2759"/>
<dbReference type="PhylomeDB" id="M1VVW5"/>
<dbReference type="BioCyc" id="MetaCyc:MONOMER-17446"/>
<dbReference type="UniPathway" id="UPA00327"/>
<dbReference type="Proteomes" id="UP000016801">
    <property type="component" value="Unassembled WGS sequence"/>
</dbReference>
<dbReference type="GO" id="GO:0016491">
    <property type="term" value="F:oxidoreductase activity"/>
    <property type="evidence" value="ECO:0007669"/>
    <property type="project" value="UniProtKB-KW"/>
</dbReference>
<dbReference type="GO" id="GO:0035835">
    <property type="term" value="P:indole alkaloid biosynthetic process"/>
    <property type="evidence" value="ECO:0007669"/>
    <property type="project" value="UniProtKB-UniPathway"/>
</dbReference>
<dbReference type="CDD" id="cd05233">
    <property type="entry name" value="SDR_c"/>
    <property type="match status" value="1"/>
</dbReference>
<dbReference type="FunFam" id="3.40.50.720:FF:000084">
    <property type="entry name" value="Short-chain dehydrogenase reductase"/>
    <property type="match status" value="1"/>
</dbReference>
<dbReference type="Gene3D" id="3.40.50.720">
    <property type="entry name" value="NAD(P)-binding Rossmann-like Domain"/>
    <property type="match status" value="1"/>
</dbReference>
<dbReference type="InterPro" id="IPR036291">
    <property type="entry name" value="NAD(P)-bd_dom_sf"/>
</dbReference>
<dbReference type="InterPro" id="IPR002347">
    <property type="entry name" value="SDR_fam"/>
</dbReference>
<dbReference type="PANTHER" id="PTHR43180">
    <property type="entry name" value="3-OXOACYL-(ACYL-CARRIER-PROTEIN) REDUCTASE (AFU_ORTHOLOGUE AFUA_6G11210)"/>
    <property type="match status" value="1"/>
</dbReference>
<dbReference type="PANTHER" id="PTHR43180:SF63">
    <property type="entry name" value="DEHYDROGENASE_REDUCTASE FAMILY PROTEIN, PUTATIVE (AFU_ORTHOLOGUE AFUA_6G03520)-RELATED"/>
    <property type="match status" value="1"/>
</dbReference>
<dbReference type="Pfam" id="PF13561">
    <property type="entry name" value="adh_short_C2"/>
    <property type="match status" value="1"/>
</dbReference>
<dbReference type="PRINTS" id="PR00081">
    <property type="entry name" value="GDHRDH"/>
</dbReference>
<dbReference type="SUPFAM" id="SSF51735">
    <property type="entry name" value="NAD(P)-binding Rossmann-fold domains"/>
    <property type="match status" value="1"/>
</dbReference>
<feature type="signal peptide" evidence="6">
    <location>
        <begin position="1"/>
        <end position="20"/>
    </location>
</feature>
<feature type="chain" id="PRO_0000439128" description="Chanoclavine-I dehydrogenase easD">
    <location>
        <begin position="21"/>
        <end position="261"/>
    </location>
</feature>
<feature type="active site" description="Proton donor" evidence="3">
    <location>
        <position position="166"/>
    </location>
</feature>
<feature type="active site" description="Lowers pKa of active site Tyr" evidence="3">
    <location>
        <position position="170"/>
    </location>
</feature>
<feature type="binding site" evidence="2">
    <location>
        <position position="18"/>
    </location>
    <ligand>
        <name>NADP(+)</name>
        <dbReference type="ChEBI" id="CHEBI:58349"/>
    </ligand>
</feature>
<feature type="binding site" evidence="2">
    <location>
        <position position="66"/>
    </location>
    <ligand>
        <name>NADP(+)</name>
        <dbReference type="ChEBI" id="CHEBI:58349"/>
    </ligand>
</feature>
<feature type="binding site" evidence="2">
    <location>
        <position position="132"/>
    </location>
    <ligand>
        <name>NADP(+)</name>
        <dbReference type="ChEBI" id="CHEBI:58349"/>
    </ligand>
</feature>
<feature type="binding site" evidence="3">
    <location>
        <position position="166"/>
    </location>
    <ligand>
        <name>NADP(+)</name>
        <dbReference type="ChEBI" id="CHEBI:58349"/>
    </ligand>
</feature>
<feature type="binding site" evidence="3">
    <location>
        <position position="170"/>
    </location>
    <ligand>
        <name>NADP(+)</name>
        <dbReference type="ChEBI" id="CHEBI:58349"/>
    </ligand>
</feature>
<feature type="binding site" evidence="2">
    <location>
        <position position="201"/>
    </location>
    <ligand>
        <name>NADP(+)</name>
        <dbReference type="ChEBI" id="CHEBI:58349"/>
    </ligand>
</feature>
<feature type="glycosylation site" description="N-linked (GlcNAc...) asparagine" evidence="7">
    <location>
        <position position="43"/>
    </location>
</feature>
<gene>
    <name evidence="21" type="primary">easD</name>
    <name evidence="20" type="synonym">cpox2</name>
    <name type="ORF">CPUR_04080</name>
</gene>
<organism>
    <name type="scientific">Claviceps purpurea (strain 20.1)</name>
    <name type="common">Ergot fungus</name>
    <name type="synonym">Sphacelia segetum</name>
    <dbReference type="NCBI Taxonomy" id="1111077"/>
    <lineage>
        <taxon>Eukaryota</taxon>
        <taxon>Fungi</taxon>
        <taxon>Dikarya</taxon>
        <taxon>Ascomycota</taxon>
        <taxon>Pezizomycotina</taxon>
        <taxon>Sordariomycetes</taxon>
        <taxon>Hypocreomycetidae</taxon>
        <taxon>Hypocreales</taxon>
        <taxon>Clavicipitaceae</taxon>
        <taxon>Claviceps</taxon>
    </lineage>
</organism>
<comment type="function">
    <text evidence="5 8 9 10 11 12 13 14 15 16 17 18 19 24 25">Chanoclavine-I dehydrogenase; part of the gene cluster that mediates the biosynthesis of fungal ergot alkaloid (PubMed:10071219, PubMed:14700635, PubMed:14732265, PubMed:15904941, PubMed:17308187, PubMed:17720822). DmaW catalyzes the first step of ergot alkaloid biosynthesis by condensing dimethylallyl diphosphate (DMAP) and tryptophan to form 4-dimethylallyl-L-tryptophan (PubMed:14732265). The second step is catalyzed by the methyltransferase easF that methylates 4-dimethylallyl-L-tryptophan in the presence of S-adenosyl-L-methionine, resulting in the formation of 4-dimethylallyl-L-abrine (By similarity). The catalase easC and the FAD-dependent oxidoreductase easE then transform 4-dimethylallyl-L-abrine to chanoclavine-I which is further oxidized by easD in the presence of NAD(+), resulting in the formation of chanoclavine-I aldehyde (PubMed:20118373, PubMed:21409592). Agroclavine dehydrogenase easG then mediates the conversion of chanoclavine-I aldehyde to agroclavine via a non-enzymatic adduct reaction: the substrate is an iminium intermediate that is formed spontaneously from chanoclavine-I aldehyde in the presence of glutathione (PubMed:20735127, PubMed:21494745). The presence of easA is not required to complete this reaction (PubMed:21494745). Further conversion of agroclavine to paspalic acid is a two-step process involving oxidation of agroclavine to elymoclavine and of elymoclavine to paspalic acid, the second step being performed by the elymoclavine oxidase cloA (PubMed:16538694, PubMed:17720822). Paspalic acid is then further converted to D-lysergic acid (PubMed:15904941). Ergopeptines are assembled from D-lysergic acid and three different amino acids by the D-lysergyl-peptide-synthetases composed each of a monomudular and a trimodular nonribosomal peptide synthetase subunit (PubMed:14700635, PubMed:15904941). LpsB and lpsC encode the monomodular subunits responsible for D-lysergic acid activation and incorporation into the ergopeptine backbone (PubMed:14700635). LpsA1 and A2 subunits encode the trimodular nonribosomal peptide synthetase assembling the tripeptide portion of ergopeptines (PubMed:14700635). LpsA1 is responsible for formation of the major ergopeptine, ergotamine, and lpsA2 for alpha-ergocryptine, the minor ergopeptine of the total alkaloid mixture elaborated by C.purpurea (PubMed:17560817, PubMed:19139103). D-lysergyl-tripeptides are assembled by the nonribosomal peptide synthetases and released as N-(D-lysergyl-aminoacyl)-lactams (PubMed:24361048). Cyclolization of the D-lysergyl-tripeptides is performed by the Fe(2+)/2-ketoglutarate-dependent dioxygenase easH which introduces a hydroxyl group into N-(D-lysergyl-aminoacyl)-lactam at alpha-C of the aminoacyl residue followed by spontaneous condensation with the terminal lactam carbonyl group (PubMed:24361048).</text>
</comment>
<comment type="catalytic activity">
    <reaction evidence="4">
        <text>chanoclavine-I + NAD(+) = chanoclavine-I aldehyde + NADH + H(+)</text>
        <dbReference type="Rhea" id="RHEA:33891"/>
        <dbReference type="ChEBI" id="CHEBI:15378"/>
        <dbReference type="ChEBI" id="CHEBI:57540"/>
        <dbReference type="ChEBI" id="CHEBI:57945"/>
        <dbReference type="ChEBI" id="CHEBI:71487"/>
        <dbReference type="ChEBI" id="CHEBI:72949"/>
        <dbReference type="EC" id="1.1.1.332"/>
    </reaction>
</comment>
<comment type="pathway">
    <text evidence="23">Alkaloid biosynthesis; ergot alkaloid biosynthesis.</text>
</comment>
<comment type="subunit">
    <text evidence="1">Homotetramer.</text>
</comment>
<comment type="similarity">
    <text evidence="22">Belongs to the short-chain dehydrogenases/reductases (SDR) family.</text>
</comment>
<evidence type="ECO:0000250" key="1">
    <source>
        <dbReference type="UniProtKB" id="D4AK45"/>
    </source>
</evidence>
<evidence type="ECO:0000250" key="2">
    <source>
        <dbReference type="UniProtKB" id="L0E2Z4"/>
    </source>
</evidence>
<evidence type="ECO:0000250" key="3">
    <source>
        <dbReference type="UniProtKB" id="O93868"/>
    </source>
</evidence>
<evidence type="ECO:0000250" key="4">
    <source>
        <dbReference type="UniProtKB" id="Q4WZ66"/>
    </source>
</evidence>
<evidence type="ECO:0000250" key="5">
    <source>
        <dbReference type="UniProtKB" id="Q50EL0"/>
    </source>
</evidence>
<evidence type="ECO:0000255" key="6"/>
<evidence type="ECO:0000255" key="7">
    <source>
        <dbReference type="PROSITE-ProRule" id="PRU00498"/>
    </source>
</evidence>
<evidence type="ECO:0000269" key="8">
    <source>
    </source>
</evidence>
<evidence type="ECO:0000269" key="9">
    <source>
    </source>
</evidence>
<evidence type="ECO:0000269" key="10">
    <source>
    </source>
</evidence>
<evidence type="ECO:0000269" key="11">
    <source>
    </source>
</evidence>
<evidence type="ECO:0000269" key="12">
    <source>
    </source>
</evidence>
<evidence type="ECO:0000269" key="13">
    <source>
    </source>
</evidence>
<evidence type="ECO:0000269" key="14">
    <source>
    </source>
</evidence>
<evidence type="ECO:0000269" key="15">
    <source>
    </source>
</evidence>
<evidence type="ECO:0000269" key="16">
    <source>
    </source>
</evidence>
<evidence type="ECO:0000269" key="17">
    <source>
    </source>
</evidence>
<evidence type="ECO:0000269" key="18">
    <source>
    </source>
</evidence>
<evidence type="ECO:0000269" key="19">
    <source>
    </source>
</evidence>
<evidence type="ECO:0000303" key="20">
    <source>
    </source>
</evidence>
<evidence type="ECO:0000303" key="21">
    <source>
    </source>
</evidence>
<evidence type="ECO:0000305" key="22"/>
<evidence type="ECO:0000305" key="23">
    <source>
    </source>
</evidence>
<evidence type="ECO:0000305" key="24">
    <source>
    </source>
</evidence>
<evidence type="ECO:0000305" key="25">
    <source>
    </source>
</evidence>
<reference key="1">
    <citation type="submission" date="2011-06" db="EMBL/GenBank/DDBJ databases">
        <authorList>
            <person name="Florea S."/>
            <person name="Oeser B."/>
            <person name="Tudzynski P."/>
            <person name="Schardl C.L."/>
        </authorList>
    </citation>
    <scope>NUCLEOTIDE SEQUENCE [GENOMIC DNA]</scope>
    <source>
        <strain>20.1</strain>
    </source>
</reference>
<reference key="2">
    <citation type="journal article" date="2013" name="PLoS Genet.">
        <title>Plant-symbiotic fungi as chemical engineers: Multi-genome analysis of the Clavicipitaceae reveals dynamics of alkaloid loci.</title>
        <authorList>
            <person name="Schardl C.L."/>
            <person name="Young C.A."/>
            <person name="Hesse U."/>
            <person name="Amyotte S.G."/>
            <person name="Andreeva K."/>
            <person name="Calie P.J."/>
            <person name="Fleetwood D.J."/>
            <person name="Haws D.C."/>
            <person name="Moore N."/>
            <person name="Oeser B."/>
            <person name="Panaccione D.G."/>
            <person name="Schweri K.K."/>
            <person name="Voisey C.R."/>
            <person name="Farman M.L."/>
            <person name="Jaromczyk J.W."/>
            <person name="Roe B.A."/>
            <person name="O'Sullivan D.M."/>
            <person name="Scott B."/>
            <person name="Tudzynski P."/>
            <person name="An Z."/>
            <person name="Arnaoudova E.G."/>
            <person name="Bullock C.T."/>
            <person name="Charlton N.D."/>
            <person name="Chen L."/>
            <person name="Cox M."/>
            <person name="Dinkins R.D."/>
            <person name="Florea S."/>
            <person name="Glenn A.E."/>
            <person name="Gordon A."/>
            <person name="Gueldener U."/>
            <person name="Harris D.R."/>
            <person name="Hollin W."/>
            <person name="Jaromczyk J."/>
            <person name="Johnson R.D."/>
            <person name="Khan A.K."/>
            <person name="Leistner E."/>
            <person name="Leuchtmann A."/>
            <person name="Li C."/>
            <person name="Liu J."/>
            <person name="Liu J."/>
            <person name="Liu M."/>
            <person name="Mace W."/>
            <person name="Machado C."/>
            <person name="Nagabhyru P."/>
            <person name="Pan J."/>
            <person name="Schmid J."/>
            <person name="Sugawara K."/>
            <person name="Steiner U."/>
            <person name="Takach J.E."/>
            <person name="Tanaka E."/>
            <person name="Webb J.S."/>
            <person name="Wilson E.V."/>
            <person name="Wiseman J.L."/>
            <person name="Yoshida R."/>
            <person name="Zeng Z."/>
        </authorList>
    </citation>
    <scope>NUCLEOTIDE SEQUENCE [LARGE SCALE GENOMIC DNA]</scope>
    <source>
        <strain>20.1</strain>
    </source>
</reference>
<reference key="3">
    <citation type="journal article" date="1999" name="Mol. Gen. Genet.">
        <title>Evidence for an ergot alkaloid gene cluster in Claviceps purpurea.</title>
        <authorList>
            <person name="Tudzynski P."/>
            <person name="Hoelter K."/>
            <person name="Correia T.H."/>
            <person name="Arntz C."/>
            <person name="Grammel N."/>
            <person name="Keller U."/>
        </authorList>
    </citation>
    <scope>IDENTIFICATION IN THE EAS CLUSTER</scope>
    <scope>FUNCTION</scope>
    <source>
        <strain>P1 / 1029/N5</strain>
    </source>
</reference>
<reference key="4">
    <citation type="journal article" date="2001" name="Appl. Microbiol. Biotechnol.">
        <title>Biotechnology and genetics of ergot alkaloids.</title>
        <authorList>
            <person name="Tudzynski P."/>
            <person name="Correia T."/>
            <person name="Keller U."/>
        </authorList>
    </citation>
    <scope>BIOTECHNOLOGY</scope>
    <source>
        <strain>P1 / 1029/N5</strain>
    </source>
</reference>
<reference key="5">
    <citation type="journal article" date="2003" name="Chem. Biol.">
        <title>Molecular cloning and analysis of the ergopeptine assembly system in the ergot fungus Claviceps purpurea.</title>
        <authorList>
            <person name="Correia T."/>
            <person name="Grammel N."/>
            <person name="Ortel I."/>
            <person name="Keller U."/>
            <person name="Tudzynski P."/>
        </authorList>
    </citation>
    <scope>FUNCTION</scope>
</reference>
<reference key="6">
    <citation type="journal article" date="2004" name="Fungal Genet. Biol.">
        <title>The determinant step in ergot alkaloid biosynthesis by an endophyte of perennial ryegrass.</title>
        <authorList>
            <person name="Wang J."/>
            <person name="Machado C."/>
            <person name="Panaccione D.G."/>
            <person name="Tsai H.-F."/>
            <person name="Schardl C.L."/>
        </authorList>
    </citation>
    <scope>FUNCTION</scope>
    <source>
        <strain>ATCC 20102 / Farmitalia FI 32/17</strain>
    </source>
</reference>
<reference key="7">
    <citation type="journal article" date="2005" name="Phytochemistry">
        <title>The ergot alkaloid gene cluster in Claviceps purpurea: extension of the cluster sequence and intra species evolution.</title>
        <authorList>
            <person name="Haarmann T."/>
            <person name="Machado C."/>
            <person name="Lubbe Y."/>
            <person name="Correia T."/>
            <person name="Schardl C.L."/>
            <person name="Panaccione D.G."/>
            <person name="Tudzynski P."/>
        </authorList>
    </citation>
    <scope>FUNCTION</scope>
    <scope>IDENTIFICATION IN THE EAS CLUSTER</scope>
</reference>
<reference key="8">
    <citation type="journal article" date="2006" name="ChemBioChem">
        <title>Identification of the cytochrome P450 monooxygenase that bridges the clavine and ergoline alkaloid pathways.</title>
        <authorList>
            <person name="Haarmann T."/>
            <person name="Ortel I."/>
            <person name="Tudzynski P."/>
            <person name="Keller U."/>
        </authorList>
    </citation>
    <scope>FUNCTION</scope>
    <source>
        <strain>P1 / 1029/N5</strain>
    </source>
</reference>
<reference key="9">
    <citation type="journal article" date="2007" name="Appl. Environ. Microbiol.">
        <title>A complex ergovaline gene cluster in epichloe endophytes of grasses.</title>
        <authorList>
            <person name="Fleetwood D.J."/>
            <person name="Scott B."/>
            <person name="Lane G.A."/>
            <person name="Tanaka A."/>
            <person name="Johnson R.D."/>
        </authorList>
    </citation>
    <scope>FUNCTION</scope>
</reference>
<reference key="10">
    <citation type="journal article" date="2007" name="Appl. Environ. Microbiol.">
        <title>Comparison of ergot alkaloid biosynthesis gene clusters in Claviceps species indicates loss of late pathway steps in evolution of C. fusiformis.</title>
        <authorList>
            <person name="Lorenz N."/>
            <person name="Wilson E.V."/>
            <person name="Machado C."/>
            <person name="Schardl C.L."/>
            <person name="Tudzynski P."/>
        </authorList>
    </citation>
    <scope>FUNCTION</scope>
</reference>
<reference key="11">
    <citation type="journal article" date="2008" name="Fungal Genet. Biol.">
        <title>Use of a nonhomologous end joining deficient strain (Deltaku70) of the ergot fungus Claviceps purpurea for identification of a nonribosomal peptide synthetase gene involved in ergotamine biosynthesis.</title>
        <authorList>
            <person name="Haarmann T."/>
            <person name="Lorenz N."/>
            <person name="Tudzynski P."/>
        </authorList>
    </citation>
    <scope>FUNCTION</scope>
</reference>
<reference key="12">
    <citation type="journal article" date="2009" name="J. Biol. Chem.">
        <title>Combinatorial assembly of simple and complex D-lysergic acid alkaloid peptide classes in the ergot fungus Claviceps purpurea.</title>
        <authorList>
            <person name="Ortel I."/>
            <person name="Keller U."/>
        </authorList>
    </citation>
    <scope>FUNCTION</scope>
</reference>
<reference key="13">
    <citation type="journal article" date="2010" name="Appl. Environ. Microbiol.">
        <title>Alkaloid cluster gene ccsA of the ergot fungus Claviceps purpurea encodes chanoclavine I synthase, a flavin adenine dinucleotide-containing oxidoreductase mediating the transformation of N-methyl-dimethylallyltryptophan to chanoclavine I.</title>
        <authorList>
            <person name="Lorenz N."/>
            <person name="Olsovska J."/>
            <person name="Sulc M."/>
            <person name="Tudzynski P."/>
        </authorList>
    </citation>
    <scope>FUNCTION</scope>
</reference>
<reference key="14">
    <citation type="journal article" date="2010" name="J. Am. Chem. Soc.">
        <title>Controlling a structural branch point in ergot alkaloid biosynthesis.</title>
        <authorList>
            <person name="Cheng J.Z."/>
            <person name="Coyle C.M."/>
            <person name="Panaccione D.G."/>
            <person name="O'Connor S.E."/>
        </authorList>
    </citation>
    <scope>FUNCTION</scope>
    <source>
        <strain>ATCC 20102 / Farmitalia FI 32/17</strain>
    </source>
</reference>
<reference key="15">
    <citation type="journal article" date="2011" name="Curr. Genet.">
        <title>Ergot cluster-encoded catalase is required for synthesis of chanoclavine-I in Aspergillus fumigatus.</title>
        <authorList>
            <person name="Goetz K.E."/>
            <person name="Coyle C.M."/>
            <person name="Cheng J.Z."/>
            <person name="O'Connor S.E."/>
            <person name="Panaccione D.G."/>
        </authorList>
    </citation>
    <scope>FUNCTION</scope>
</reference>
<reference key="16">
    <citation type="journal article" date="2011" name="Org. Biomol. Chem.">
        <title>New insights into ergot alkaloid biosynthesis in Claviceps purpurea: an agroclavine synthase EasG catalyses, via a non-enzymatic adduct with reduced glutathione, the conversion of chanoclavine-I aldehyde to agroclavine.</title>
        <authorList>
            <person name="Matuschek M."/>
            <person name="Wallwey C."/>
            <person name="Xie X."/>
            <person name="Li S.M."/>
        </authorList>
    </citation>
    <scope>FUNCTION</scope>
</reference>
<reference key="17">
    <citation type="journal article" date="2014" name="Chem. Biol.">
        <title>Cyclolization of D-lysergic acid alkaloid peptides.</title>
        <authorList>
            <person name="Havemann J."/>
            <person name="Vogel D."/>
            <person name="Loll B."/>
            <person name="Keller U."/>
        </authorList>
    </citation>
    <scope>FUNCTION</scope>
</reference>